<accession>C1A8M5</accession>
<comment type="function">
    <text evidence="1">Catalyzes the attachment of serine to tRNA(Ser). Is also able to aminoacylate tRNA(Sec) with serine, to form the misacylated tRNA L-seryl-tRNA(Sec), which will be further converted into selenocysteinyl-tRNA(Sec).</text>
</comment>
<comment type="catalytic activity">
    <reaction evidence="1">
        <text>tRNA(Ser) + L-serine + ATP = L-seryl-tRNA(Ser) + AMP + diphosphate + H(+)</text>
        <dbReference type="Rhea" id="RHEA:12292"/>
        <dbReference type="Rhea" id="RHEA-COMP:9669"/>
        <dbReference type="Rhea" id="RHEA-COMP:9703"/>
        <dbReference type="ChEBI" id="CHEBI:15378"/>
        <dbReference type="ChEBI" id="CHEBI:30616"/>
        <dbReference type="ChEBI" id="CHEBI:33019"/>
        <dbReference type="ChEBI" id="CHEBI:33384"/>
        <dbReference type="ChEBI" id="CHEBI:78442"/>
        <dbReference type="ChEBI" id="CHEBI:78533"/>
        <dbReference type="ChEBI" id="CHEBI:456215"/>
        <dbReference type="EC" id="6.1.1.11"/>
    </reaction>
</comment>
<comment type="catalytic activity">
    <reaction evidence="1">
        <text>tRNA(Sec) + L-serine + ATP = L-seryl-tRNA(Sec) + AMP + diphosphate + H(+)</text>
        <dbReference type="Rhea" id="RHEA:42580"/>
        <dbReference type="Rhea" id="RHEA-COMP:9742"/>
        <dbReference type="Rhea" id="RHEA-COMP:10128"/>
        <dbReference type="ChEBI" id="CHEBI:15378"/>
        <dbReference type="ChEBI" id="CHEBI:30616"/>
        <dbReference type="ChEBI" id="CHEBI:33019"/>
        <dbReference type="ChEBI" id="CHEBI:33384"/>
        <dbReference type="ChEBI" id="CHEBI:78442"/>
        <dbReference type="ChEBI" id="CHEBI:78533"/>
        <dbReference type="ChEBI" id="CHEBI:456215"/>
        <dbReference type="EC" id="6.1.1.11"/>
    </reaction>
</comment>
<comment type="pathway">
    <text evidence="1">Aminoacyl-tRNA biosynthesis; selenocysteinyl-tRNA(Sec) biosynthesis; L-seryl-tRNA(Sec) from L-serine and tRNA(Sec): step 1/1.</text>
</comment>
<comment type="subunit">
    <text evidence="1">Homodimer. The tRNA molecule binds across the dimer.</text>
</comment>
<comment type="subcellular location">
    <subcellularLocation>
        <location evidence="1">Cytoplasm</location>
    </subcellularLocation>
</comment>
<comment type="domain">
    <text evidence="1">Consists of two distinct domains, a catalytic core and a N-terminal extension that is involved in tRNA binding.</text>
</comment>
<comment type="similarity">
    <text evidence="1">Belongs to the class-II aminoacyl-tRNA synthetase family. Type-1 seryl-tRNA synthetase subfamily.</text>
</comment>
<name>SYS_GEMAT</name>
<proteinExistence type="inferred from homology"/>
<reference key="1">
    <citation type="submission" date="2006-03" db="EMBL/GenBank/DDBJ databases">
        <title>Complete genome sequence of Gemmatimonas aurantiaca T-27 that represents a novel phylum Gemmatimonadetes.</title>
        <authorList>
            <person name="Takasaki K."/>
            <person name="Ichikawa N."/>
            <person name="Miura H."/>
            <person name="Matsushita S."/>
            <person name="Watanabe Y."/>
            <person name="Oguchi A."/>
            <person name="Ankai A."/>
            <person name="Yashiro I."/>
            <person name="Takahashi M."/>
            <person name="Terui Y."/>
            <person name="Fukui S."/>
            <person name="Yokoyama H."/>
            <person name="Tanikawa S."/>
            <person name="Hanada S."/>
            <person name="Kamagata Y."/>
            <person name="Fujita N."/>
        </authorList>
    </citation>
    <scope>NUCLEOTIDE SEQUENCE [LARGE SCALE GENOMIC DNA]</scope>
    <source>
        <strain>DSM 14586 / JCM 11422 / NBRC 100505 / T-27</strain>
    </source>
</reference>
<sequence length="425" mass="47513">MHDIRLLRDQLDVLREGMRRRGKLTELGDVLDRAESLEQARRTAITELEAQQARRNKVTQEVAQRRKAGEDATALIAEGRAIGEQITALEQRRNEADAAVQAMLYELPNIPLADVPEGDETANTVVRTWGTPRTPDASIVPHWDKGEALGMLDLARGAKISGSGFIVYRNRGARLVRALMNMMLDIHTEEHGYEETWVPLVVNRASMTGTGNFPKFEEDAYAITEDELFLIPTAEVPVTNLYRDEILDAEELPKRFCAFSACFRREAGAAGKDTRGLLRVHEFDKVELVRYANPETSLEELELLTSQAETILKRLELPYRVLLLAAGDTGFSSAKTYDLEVFAPGVGKWLEVSSCSLFTDFQARRANIRYRPAAGEKPRFVHTLNGSALAFSRIIASLLEHHQQPDGSVRIPEALQPYFGRAVLA</sequence>
<dbReference type="EC" id="6.1.1.11" evidence="1"/>
<dbReference type="EMBL" id="AP009153">
    <property type="protein sequence ID" value="BAH38585.1"/>
    <property type="molecule type" value="Genomic_DNA"/>
</dbReference>
<dbReference type="RefSeq" id="WP_012683032.1">
    <property type="nucleotide sequence ID" value="NC_012489.1"/>
</dbReference>
<dbReference type="SMR" id="C1A8M5"/>
<dbReference type="STRING" id="379066.GAU_1543"/>
<dbReference type="KEGG" id="gau:GAU_1543"/>
<dbReference type="eggNOG" id="COG0172">
    <property type="taxonomic scope" value="Bacteria"/>
</dbReference>
<dbReference type="HOGENOM" id="CLU_023797_1_1_0"/>
<dbReference type="OrthoDB" id="9804647at2"/>
<dbReference type="UniPathway" id="UPA00906">
    <property type="reaction ID" value="UER00895"/>
</dbReference>
<dbReference type="Proteomes" id="UP000002209">
    <property type="component" value="Chromosome"/>
</dbReference>
<dbReference type="GO" id="GO:0005737">
    <property type="term" value="C:cytoplasm"/>
    <property type="evidence" value="ECO:0007669"/>
    <property type="project" value="UniProtKB-SubCell"/>
</dbReference>
<dbReference type="GO" id="GO:0005524">
    <property type="term" value="F:ATP binding"/>
    <property type="evidence" value="ECO:0007669"/>
    <property type="project" value="UniProtKB-UniRule"/>
</dbReference>
<dbReference type="GO" id="GO:0004828">
    <property type="term" value="F:serine-tRNA ligase activity"/>
    <property type="evidence" value="ECO:0007669"/>
    <property type="project" value="UniProtKB-UniRule"/>
</dbReference>
<dbReference type="GO" id="GO:0016260">
    <property type="term" value="P:selenocysteine biosynthetic process"/>
    <property type="evidence" value="ECO:0007669"/>
    <property type="project" value="UniProtKB-UniRule"/>
</dbReference>
<dbReference type="GO" id="GO:0006434">
    <property type="term" value="P:seryl-tRNA aminoacylation"/>
    <property type="evidence" value="ECO:0007669"/>
    <property type="project" value="UniProtKB-UniRule"/>
</dbReference>
<dbReference type="CDD" id="cd00770">
    <property type="entry name" value="SerRS_core"/>
    <property type="match status" value="1"/>
</dbReference>
<dbReference type="Gene3D" id="3.30.930.10">
    <property type="entry name" value="Bira Bifunctional Protein, Domain 2"/>
    <property type="match status" value="1"/>
</dbReference>
<dbReference type="Gene3D" id="1.10.287.40">
    <property type="entry name" value="Serine-tRNA synthetase, tRNA binding domain"/>
    <property type="match status" value="1"/>
</dbReference>
<dbReference type="HAMAP" id="MF_00176">
    <property type="entry name" value="Ser_tRNA_synth_type1"/>
    <property type="match status" value="1"/>
</dbReference>
<dbReference type="InterPro" id="IPR002314">
    <property type="entry name" value="aa-tRNA-synt_IIb"/>
</dbReference>
<dbReference type="InterPro" id="IPR006195">
    <property type="entry name" value="aa-tRNA-synth_II"/>
</dbReference>
<dbReference type="InterPro" id="IPR045864">
    <property type="entry name" value="aa-tRNA-synth_II/BPL/LPL"/>
</dbReference>
<dbReference type="InterPro" id="IPR002317">
    <property type="entry name" value="Ser-tRNA-ligase_type_1"/>
</dbReference>
<dbReference type="InterPro" id="IPR015866">
    <property type="entry name" value="Ser-tRNA-synth_1_N"/>
</dbReference>
<dbReference type="InterPro" id="IPR042103">
    <property type="entry name" value="SerRS_1_N_sf"/>
</dbReference>
<dbReference type="InterPro" id="IPR033729">
    <property type="entry name" value="SerRS_core"/>
</dbReference>
<dbReference type="InterPro" id="IPR010978">
    <property type="entry name" value="tRNA-bd_arm"/>
</dbReference>
<dbReference type="NCBIfam" id="TIGR00414">
    <property type="entry name" value="serS"/>
    <property type="match status" value="1"/>
</dbReference>
<dbReference type="PANTHER" id="PTHR43697:SF1">
    <property type="entry name" value="SERINE--TRNA LIGASE"/>
    <property type="match status" value="1"/>
</dbReference>
<dbReference type="PANTHER" id="PTHR43697">
    <property type="entry name" value="SERYL-TRNA SYNTHETASE"/>
    <property type="match status" value="1"/>
</dbReference>
<dbReference type="Pfam" id="PF02403">
    <property type="entry name" value="Seryl_tRNA_N"/>
    <property type="match status" value="1"/>
</dbReference>
<dbReference type="Pfam" id="PF00587">
    <property type="entry name" value="tRNA-synt_2b"/>
    <property type="match status" value="1"/>
</dbReference>
<dbReference type="PIRSF" id="PIRSF001529">
    <property type="entry name" value="Ser-tRNA-synth_IIa"/>
    <property type="match status" value="1"/>
</dbReference>
<dbReference type="PRINTS" id="PR00981">
    <property type="entry name" value="TRNASYNTHSER"/>
</dbReference>
<dbReference type="SUPFAM" id="SSF55681">
    <property type="entry name" value="Class II aaRS and biotin synthetases"/>
    <property type="match status" value="1"/>
</dbReference>
<dbReference type="SUPFAM" id="SSF46589">
    <property type="entry name" value="tRNA-binding arm"/>
    <property type="match status" value="1"/>
</dbReference>
<dbReference type="PROSITE" id="PS50862">
    <property type="entry name" value="AA_TRNA_LIGASE_II"/>
    <property type="match status" value="1"/>
</dbReference>
<keyword id="KW-0030">Aminoacyl-tRNA synthetase</keyword>
<keyword id="KW-0067">ATP-binding</keyword>
<keyword id="KW-0963">Cytoplasm</keyword>
<keyword id="KW-0436">Ligase</keyword>
<keyword id="KW-0547">Nucleotide-binding</keyword>
<keyword id="KW-0648">Protein biosynthesis</keyword>
<keyword id="KW-1185">Reference proteome</keyword>
<organism>
    <name type="scientific">Gemmatimonas aurantiaca (strain DSM 14586 / JCM 11422 / NBRC 100505 / T-27)</name>
    <dbReference type="NCBI Taxonomy" id="379066"/>
    <lineage>
        <taxon>Bacteria</taxon>
        <taxon>Pseudomonadati</taxon>
        <taxon>Gemmatimonadota</taxon>
        <taxon>Gemmatimonadia</taxon>
        <taxon>Gemmatimonadales</taxon>
        <taxon>Gemmatimonadaceae</taxon>
        <taxon>Gemmatimonas</taxon>
    </lineage>
</organism>
<gene>
    <name evidence="1" type="primary">serS</name>
    <name type="ordered locus">GAU_1543</name>
</gene>
<feature type="chain" id="PRO_1000203757" description="Serine--tRNA ligase">
    <location>
        <begin position="1"/>
        <end position="425"/>
    </location>
</feature>
<feature type="binding site" evidence="1">
    <location>
        <begin position="233"/>
        <end position="235"/>
    </location>
    <ligand>
        <name>L-serine</name>
        <dbReference type="ChEBI" id="CHEBI:33384"/>
    </ligand>
</feature>
<feature type="binding site" evidence="1">
    <location>
        <begin position="264"/>
        <end position="266"/>
    </location>
    <ligand>
        <name>ATP</name>
        <dbReference type="ChEBI" id="CHEBI:30616"/>
    </ligand>
</feature>
<feature type="binding site" evidence="1">
    <location>
        <position position="280"/>
    </location>
    <ligand>
        <name>ATP</name>
        <dbReference type="ChEBI" id="CHEBI:30616"/>
    </ligand>
</feature>
<feature type="binding site" evidence="1">
    <location>
        <position position="287"/>
    </location>
    <ligand>
        <name>L-serine</name>
        <dbReference type="ChEBI" id="CHEBI:33384"/>
    </ligand>
</feature>
<feature type="binding site" evidence="1">
    <location>
        <begin position="351"/>
        <end position="354"/>
    </location>
    <ligand>
        <name>ATP</name>
        <dbReference type="ChEBI" id="CHEBI:30616"/>
    </ligand>
</feature>
<feature type="binding site" evidence="1">
    <location>
        <position position="387"/>
    </location>
    <ligand>
        <name>L-serine</name>
        <dbReference type="ChEBI" id="CHEBI:33384"/>
    </ligand>
</feature>
<protein>
    <recommendedName>
        <fullName evidence="1">Serine--tRNA ligase</fullName>
        <ecNumber evidence="1">6.1.1.11</ecNumber>
    </recommendedName>
    <alternativeName>
        <fullName evidence="1">Seryl-tRNA synthetase</fullName>
        <shortName evidence="1">SerRS</shortName>
    </alternativeName>
    <alternativeName>
        <fullName evidence="1">Seryl-tRNA(Ser/Sec) synthetase</fullName>
    </alternativeName>
</protein>
<evidence type="ECO:0000255" key="1">
    <source>
        <dbReference type="HAMAP-Rule" id="MF_00176"/>
    </source>
</evidence>